<protein>
    <recommendedName>
        <fullName>Beta-amylase 2, chloroplastic</fullName>
        <ecNumber>3.2.1.2</ecNumber>
    </recommendedName>
    <alternativeName>
        <fullName>1,4-alpha-D-glucan maltohydrolase</fullName>
    </alternativeName>
    <alternativeName>
        <fullName>Beta-amylase 9</fullName>
    </alternativeName>
</protein>
<dbReference type="EC" id="3.2.1.2"/>
<dbReference type="EMBL" id="AF058919">
    <property type="protein sequence ID" value="AAC13634.1"/>
    <property type="status" value="ALT_SEQ"/>
    <property type="molecule type" value="Genomic_DNA"/>
</dbReference>
<dbReference type="EMBL" id="AL161472">
    <property type="protein sequence ID" value="CAB80858.1"/>
    <property type="status" value="ALT_SEQ"/>
    <property type="molecule type" value="Genomic_DNA"/>
</dbReference>
<dbReference type="EMBL" id="CP002687">
    <property type="protein sequence ID" value="AEE81889.1"/>
    <property type="molecule type" value="Genomic_DNA"/>
</dbReference>
<dbReference type="PIR" id="T01213">
    <property type="entry name" value="T01213"/>
</dbReference>
<dbReference type="RefSeq" id="NP_191958.3">
    <property type="nucleotide sequence ID" value="NM_116273.5"/>
</dbReference>
<dbReference type="SASBDB" id="O65258"/>
<dbReference type="SMR" id="O65258"/>
<dbReference type="BioGRID" id="13250">
    <property type="interactions" value="1"/>
</dbReference>
<dbReference type="FunCoup" id="O65258">
    <property type="interactions" value="349"/>
</dbReference>
<dbReference type="STRING" id="3702.O65258"/>
<dbReference type="CAZy" id="GH14">
    <property type="family name" value="Glycoside Hydrolase Family 14"/>
</dbReference>
<dbReference type="iPTMnet" id="O65258"/>
<dbReference type="PaxDb" id="3702-AT4G00490.1"/>
<dbReference type="ProteomicsDB" id="240739"/>
<dbReference type="EnsemblPlants" id="AT4G00490.1">
    <property type="protein sequence ID" value="AT4G00490.1"/>
    <property type="gene ID" value="AT4G00490"/>
</dbReference>
<dbReference type="GeneID" id="827959"/>
<dbReference type="Gramene" id="AT4G00490.1">
    <property type="protein sequence ID" value="AT4G00490.1"/>
    <property type="gene ID" value="AT4G00490"/>
</dbReference>
<dbReference type="KEGG" id="ath:AT4G00490"/>
<dbReference type="Araport" id="AT4G00490"/>
<dbReference type="TAIR" id="AT4G00490">
    <property type="gene designation" value="BAM2"/>
</dbReference>
<dbReference type="eggNOG" id="ENOG502QTBX">
    <property type="taxonomic scope" value="Eukaryota"/>
</dbReference>
<dbReference type="HOGENOM" id="CLU_016754_5_1_1"/>
<dbReference type="InParanoid" id="O65258"/>
<dbReference type="OMA" id="YKRLFHM"/>
<dbReference type="OrthoDB" id="1660156at2759"/>
<dbReference type="PhylomeDB" id="O65258"/>
<dbReference type="PRO" id="PR:O65258"/>
<dbReference type="Proteomes" id="UP000006548">
    <property type="component" value="Chromosome 4"/>
</dbReference>
<dbReference type="ExpressionAtlas" id="O65258">
    <property type="expression patterns" value="baseline and differential"/>
</dbReference>
<dbReference type="GO" id="GO:0009507">
    <property type="term" value="C:chloroplast"/>
    <property type="evidence" value="ECO:0000314"/>
    <property type="project" value="TAIR"/>
</dbReference>
<dbReference type="GO" id="GO:0009570">
    <property type="term" value="C:chloroplast stroma"/>
    <property type="evidence" value="ECO:0007005"/>
    <property type="project" value="TAIR"/>
</dbReference>
<dbReference type="GO" id="GO:0016161">
    <property type="term" value="F:beta-amylase activity"/>
    <property type="evidence" value="ECO:0000314"/>
    <property type="project" value="TAIR"/>
</dbReference>
<dbReference type="GO" id="GO:0000272">
    <property type="term" value="P:polysaccharide catabolic process"/>
    <property type="evidence" value="ECO:0007669"/>
    <property type="project" value="UniProtKB-KW"/>
</dbReference>
<dbReference type="FunFam" id="3.20.20.80:FF:000066">
    <property type="entry name" value="Beta-amylase"/>
    <property type="match status" value="1"/>
</dbReference>
<dbReference type="Gene3D" id="3.20.20.80">
    <property type="entry name" value="Glycosidases"/>
    <property type="match status" value="1"/>
</dbReference>
<dbReference type="InterPro" id="IPR001554">
    <property type="entry name" value="Glyco_hydro_14"/>
</dbReference>
<dbReference type="InterPro" id="IPR018238">
    <property type="entry name" value="Glyco_hydro_14_CS"/>
</dbReference>
<dbReference type="InterPro" id="IPR001371">
    <property type="entry name" value="Glyco_hydro_14B_pln"/>
</dbReference>
<dbReference type="InterPro" id="IPR017853">
    <property type="entry name" value="Glycoside_hydrolase_SF"/>
</dbReference>
<dbReference type="PANTHER" id="PTHR31352">
    <property type="entry name" value="BETA-AMYLASE 1, CHLOROPLASTIC"/>
    <property type="match status" value="1"/>
</dbReference>
<dbReference type="PANTHER" id="PTHR31352:SF58">
    <property type="entry name" value="BETA-AMYLASE 2, CHLOROPLASTIC"/>
    <property type="match status" value="1"/>
</dbReference>
<dbReference type="Pfam" id="PF01373">
    <property type="entry name" value="Glyco_hydro_14"/>
    <property type="match status" value="1"/>
</dbReference>
<dbReference type="PRINTS" id="PR00750">
    <property type="entry name" value="BETAAMYLASE"/>
</dbReference>
<dbReference type="PRINTS" id="PR00842">
    <property type="entry name" value="GLHYDLASE14B"/>
</dbReference>
<dbReference type="SUPFAM" id="SSF51445">
    <property type="entry name" value="(Trans)glycosidases"/>
    <property type="match status" value="1"/>
</dbReference>
<dbReference type="PROSITE" id="PS00506">
    <property type="entry name" value="BETA_AMYLASE_1"/>
    <property type="match status" value="1"/>
</dbReference>
<keyword id="KW-0119">Carbohydrate metabolism</keyword>
<keyword id="KW-0150">Chloroplast</keyword>
<keyword id="KW-0326">Glycosidase</keyword>
<keyword id="KW-0378">Hydrolase</keyword>
<keyword id="KW-0934">Plastid</keyword>
<keyword id="KW-0624">Polysaccharide degradation</keyword>
<keyword id="KW-1185">Reference proteome</keyword>
<keyword id="KW-0809">Transit peptide</keyword>
<accession>O65258</accession>
<evidence type="ECO:0000250" key="1"/>
<evidence type="ECO:0000255" key="2"/>
<evidence type="ECO:0000269" key="3">
    <source>
    </source>
</evidence>
<evidence type="ECO:0000269" key="4">
    <source>
    </source>
</evidence>
<evidence type="ECO:0000269" key="5">
    <source>
    </source>
</evidence>
<evidence type="ECO:0000269" key="6">
    <source>
    </source>
</evidence>
<evidence type="ECO:0000305" key="7"/>
<sequence>MAIRLNHSVIPVSVKLGAPTRVSARSSLPFSVGDWRGVSTFSGARPLVLAKVKLRAESTEEDRVPIDDDDDSTDQLVDEEIVHFEERDFAGTACVPVYVMLPLGVIDMNSEVVEPEELLDQLRTLKSVNVDGVMVDCWWGIVESHTPQVYNWSGYKKLFQMIRELGLKIQVVMSFHECGGNVGDDVHIQIPEWVREIGQSNPDIYFTDSAGRRNTECLTWGIDKQRVLRGRTALEVYFDYMRSFRVEFDEFFEEKIIPEIEVGLGPCGELRYPSYPAQFGWKYPGIGEFQCYDKYLMNSLKEAAEVRGHSFWGRGPDNTETYNSTPHGTGFFRDGGDYDSYYGRFFLNWYSRVLIDHGDRVLAMANLAFEGTCIAAKLSGIHWWYKTASHAAELTAGFYNSSNRDGYGPIAAMFKKHDAALNFTCVELRTLDQHEDFPEALADPEGLVWQVLNAAWDASIPVASENALPCYDREGYNKILENAKPLTDPDGRHLSCFTYLRLNPTLMESQNFKEFERFLKRMHGEAVPDLGLAPGTQETNPE</sequence>
<organism>
    <name type="scientific">Arabidopsis thaliana</name>
    <name type="common">Mouse-ear cress</name>
    <dbReference type="NCBI Taxonomy" id="3702"/>
    <lineage>
        <taxon>Eukaryota</taxon>
        <taxon>Viridiplantae</taxon>
        <taxon>Streptophyta</taxon>
        <taxon>Embryophyta</taxon>
        <taxon>Tracheophyta</taxon>
        <taxon>Spermatophyta</taxon>
        <taxon>Magnoliopsida</taxon>
        <taxon>eudicotyledons</taxon>
        <taxon>Gunneridae</taxon>
        <taxon>Pentapetalae</taxon>
        <taxon>rosids</taxon>
        <taxon>malvids</taxon>
        <taxon>Brassicales</taxon>
        <taxon>Brassicaceae</taxon>
        <taxon>Camelineae</taxon>
        <taxon>Arabidopsis</taxon>
    </lineage>
</organism>
<feature type="transit peptide" description="Chloroplast" evidence="2">
    <location>
        <begin position="1"/>
        <end position="55"/>
    </location>
</feature>
<feature type="chain" id="PRO_0000393417" description="Beta-amylase 2, chloroplastic">
    <location>
        <begin position="56"/>
        <end position="542"/>
    </location>
</feature>
<feature type="active site" description="Proton donor" evidence="1">
    <location>
        <position position="269"/>
    </location>
</feature>
<feature type="active site" description="Proton acceptor" evidence="1">
    <location>
        <position position="465"/>
    </location>
</feature>
<feature type="binding site" evidence="1">
    <location>
        <position position="136"/>
    </location>
    <ligand>
        <name>substrate</name>
    </ligand>
</feature>
<feature type="binding site" evidence="1">
    <location>
        <position position="176"/>
    </location>
    <ligand>
        <name>substrate</name>
    </ligand>
</feature>
<feature type="binding site" evidence="1">
    <location>
        <position position="184"/>
    </location>
    <ligand>
        <name>substrate</name>
    </ligand>
</feature>
<feature type="binding site" evidence="1">
    <location>
        <position position="377"/>
    </location>
    <ligand>
        <name>substrate</name>
    </ligand>
</feature>
<feature type="binding site" evidence="1">
    <location>
        <position position="382"/>
    </location>
    <ligand>
        <name>substrate</name>
    </ligand>
</feature>
<feature type="binding site" evidence="1">
    <location>
        <position position="424"/>
    </location>
    <ligand>
        <name>substrate</name>
    </ligand>
</feature>
<feature type="binding site" evidence="1">
    <location>
        <begin position="466"/>
        <end position="467"/>
    </location>
    <ligand>
        <name>substrate</name>
    </ligand>
</feature>
<feature type="binding site" evidence="1">
    <location>
        <position position="501"/>
    </location>
    <ligand>
        <name>substrate</name>
    </ligand>
</feature>
<proteinExistence type="evidence at protein level"/>
<name>BAM2_ARATH</name>
<reference key="1">
    <citation type="journal article" date="1999" name="Nature">
        <title>Sequence and analysis of chromosome 4 of the plant Arabidopsis thaliana.</title>
        <authorList>
            <person name="Mayer K.F.X."/>
            <person name="Schueller C."/>
            <person name="Wambutt R."/>
            <person name="Murphy G."/>
            <person name="Volckaert G."/>
            <person name="Pohl T."/>
            <person name="Duesterhoeft A."/>
            <person name="Stiekema W."/>
            <person name="Entian K.-D."/>
            <person name="Terryn N."/>
            <person name="Harris B."/>
            <person name="Ansorge W."/>
            <person name="Brandt P."/>
            <person name="Grivell L.A."/>
            <person name="Rieger M."/>
            <person name="Weichselgartner M."/>
            <person name="de Simone V."/>
            <person name="Obermaier B."/>
            <person name="Mache R."/>
            <person name="Mueller M."/>
            <person name="Kreis M."/>
            <person name="Delseny M."/>
            <person name="Puigdomenech P."/>
            <person name="Watson M."/>
            <person name="Schmidtheini T."/>
            <person name="Reichert B."/>
            <person name="Portetelle D."/>
            <person name="Perez-Alonso M."/>
            <person name="Boutry M."/>
            <person name="Bancroft I."/>
            <person name="Vos P."/>
            <person name="Hoheisel J."/>
            <person name="Zimmermann W."/>
            <person name="Wedler H."/>
            <person name="Ridley P."/>
            <person name="Langham S.-A."/>
            <person name="McCullagh B."/>
            <person name="Bilham L."/>
            <person name="Robben J."/>
            <person name="van der Schueren J."/>
            <person name="Grymonprez B."/>
            <person name="Chuang Y.-J."/>
            <person name="Vandenbussche F."/>
            <person name="Braeken M."/>
            <person name="Weltjens I."/>
            <person name="Voet M."/>
            <person name="Bastiaens I."/>
            <person name="Aert R."/>
            <person name="Defoor E."/>
            <person name="Weitzenegger T."/>
            <person name="Bothe G."/>
            <person name="Ramsperger U."/>
            <person name="Hilbert H."/>
            <person name="Braun M."/>
            <person name="Holzer E."/>
            <person name="Brandt A."/>
            <person name="Peters S."/>
            <person name="van Staveren M."/>
            <person name="Dirkse W."/>
            <person name="Mooijman P."/>
            <person name="Klein Lankhorst R."/>
            <person name="Rose M."/>
            <person name="Hauf J."/>
            <person name="Koetter P."/>
            <person name="Berneiser S."/>
            <person name="Hempel S."/>
            <person name="Feldpausch M."/>
            <person name="Lamberth S."/>
            <person name="Van den Daele H."/>
            <person name="De Keyser A."/>
            <person name="Buysshaert C."/>
            <person name="Gielen J."/>
            <person name="Villarroel R."/>
            <person name="De Clercq R."/>
            <person name="van Montagu M."/>
            <person name="Rogers J."/>
            <person name="Cronin A."/>
            <person name="Quail M.A."/>
            <person name="Bray-Allen S."/>
            <person name="Clark L."/>
            <person name="Doggett J."/>
            <person name="Hall S."/>
            <person name="Kay M."/>
            <person name="Lennard N."/>
            <person name="McLay K."/>
            <person name="Mayes R."/>
            <person name="Pettett A."/>
            <person name="Rajandream M.A."/>
            <person name="Lyne M."/>
            <person name="Benes V."/>
            <person name="Rechmann S."/>
            <person name="Borkova D."/>
            <person name="Bloecker H."/>
            <person name="Scharfe M."/>
            <person name="Grimm M."/>
            <person name="Loehnert T.-H."/>
            <person name="Dose S."/>
            <person name="de Haan M."/>
            <person name="Maarse A.C."/>
            <person name="Schaefer M."/>
            <person name="Mueller-Auer S."/>
            <person name="Gabel C."/>
            <person name="Fuchs M."/>
            <person name="Fartmann B."/>
            <person name="Granderath K."/>
            <person name="Dauner D."/>
            <person name="Herzl A."/>
            <person name="Neumann S."/>
            <person name="Argiriou A."/>
            <person name="Vitale D."/>
            <person name="Liguori R."/>
            <person name="Piravandi E."/>
            <person name="Massenet O."/>
            <person name="Quigley F."/>
            <person name="Clabauld G."/>
            <person name="Muendlein A."/>
            <person name="Felber R."/>
            <person name="Schnabl S."/>
            <person name="Hiller R."/>
            <person name="Schmidt W."/>
            <person name="Lecharny A."/>
            <person name="Aubourg S."/>
            <person name="Chefdor F."/>
            <person name="Cooke R."/>
            <person name="Berger C."/>
            <person name="Monfort A."/>
            <person name="Casacuberta E."/>
            <person name="Gibbons T."/>
            <person name="Weber N."/>
            <person name="Vandenbol M."/>
            <person name="Bargues M."/>
            <person name="Terol J."/>
            <person name="Torres A."/>
            <person name="Perez-Perez A."/>
            <person name="Purnelle B."/>
            <person name="Bent E."/>
            <person name="Johnson S."/>
            <person name="Tacon D."/>
            <person name="Jesse T."/>
            <person name="Heijnen L."/>
            <person name="Schwarz S."/>
            <person name="Scholler P."/>
            <person name="Heber S."/>
            <person name="Francs P."/>
            <person name="Bielke C."/>
            <person name="Frishman D."/>
            <person name="Haase D."/>
            <person name="Lemcke K."/>
            <person name="Mewes H.-W."/>
            <person name="Stocker S."/>
            <person name="Zaccaria P."/>
            <person name="Bevan M."/>
            <person name="Wilson R.K."/>
            <person name="de la Bastide M."/>
            <person name="Habermann K."/>
            <person name="Parnell L."/>
            <person name="Dedhia N."/>
            <person name="Gnoj L."/>
            <person name="Schutz K."/>
            <person name="Huang E."/>
            <person name="Spiegel L."/>
            <person name="Sekhon M."/>
            <person name="Murray J."/>
            <person name="Sheet P."/>
            <person name="Cordes M."/>
            <person name="Abu-Threideh J."/>
            <person name="Stoneking T."/>
            <person name="Kalicki J."/>
            <person name="Graves T."/>
            <person name="Harmon G."/>
            <person name="Edwards J."/>
            <person name="Latreille P."/>
            <person name="Courtney L."/>
            <person name="Cloud J."/>
            <person name="Abbott A."/>
            <person name="Scott K."/>
            <person name="Johnson D."/>
            <person name="Minx P."/>
            <person name="Bentley D."/>
            <person name="Fulton B."/>
            <person name="Miller N."/>
            <person name="Greco T."/>
            <person name="Kemp K."/>
            <person name="Kramer J."/>
            <person name="Fulton L."/>
            <person name="Mardis E."/>
            <person name="Dante M."/>
            <person name="Pepin K."/>
            <person name="Hillier L.W."/>
            <person name="Nelson J."/>
            <person name="Spieth J."/>
            <person name="Ryan E."/>
            <person name="Andrews S."/>
            <person name="Geisel C."/>
            <person name="Layman D."/>
            <person name="Du H."/>
            <person name="Ali J."/>
            <person name="Berghoff A."/>
            <person name="Jones K."/>
            <person name="Drone K."/>
            <person name="Cotton M."/>
            <person name="Joshu C."/>
            <person name="Antonoiu B."/>
            <person name="Zidanic M."/>
            <person name="Strong C."/>
            <person name="Sun H."/>
            <person name="Lamar B."/>
            <person name="Yordan C."/>
            <person name="Ma P."/>
            <person name="Zhong J."/>
            <person name="Preston R."/>
            <person name="Vil D."/>
            <person name="Shekher M."/>
            <person name="Matero A."/>
            <person name="Shah R."/>
            <person name="Swaby I.K."/>
            <person name="O'Shaughnessy A."/>
            <person name="Rodriguez M."/>
            <person name="Hoffman J."/>
            <person name="Till S."/>
            <person name="Granat S."/>
            <person name="Shohdy N."/>
            <person name="Hasegawa A."/>
            <person name="Hameed A."/>
            <person name="Lodhi M."/>
            <person name="Johnson A."/>
            <person name="Chen E."/>
            <person name="Marra M.A."/>
            <person name="Martienssen R."/>
            <person name="McCombie W.R."/>
        </authorList>
    </citation>
    <scope>NUCLEOTIDE SEQUENCE [LARGE SCALE GENOMIC DNA]</scope>
    <source>
        <strain>cv. Columbia</strain>
    </source>
</reference>
<reference key="2">
    <citation type="journal article" date="2017" name="Plant J.">
        <title>Araport11: a complete reannotation of the Arabidopsis thaliana reference genome.</title>
        <authorList>
            <person name="Cheng C.Y."/>
            <person name="Krishnakumar V."/>
            <person name="Chan A.P."/>
            <person name="Thibaud-Nissen F."/>
            <person name="Schobel S."/>
            <person name="Town C.D."/>
        </authorList>
    </citation>
    <scope>GENOME REANNOTATION</scope>
    <source>
        <strain>cv. Columbia</strain>
    </source>
</reference>
<reference key="3">
    <citation type="journal article" date="2005" name="Plant J.">
        <title>RNA interference of Arabidopsis beta-amylase8 prevents maltose accumulation upon cold shock and increases sensitivity of PSII photochemical efficiency to freezing stress.</title>
        <authorList>
            <person name="Kaplan F."/>
            <person name="Guy C.L."/>
        </authorList>
    </citation>
    <scope>INDUCTION BY COLD</scope>
</reference>
<reference key="4">
    <citation type="journal article" date="2008" name="Plant Cell">
        <title>Beta-AMYLASE4, a noncatalytic protein required for starch breakdown, acts upstream of three active beta-amylases in Arabidopsis chloroplasts.</title>
        <authorList>
            <person name="Fulton D.C."/>
            <person name="Stettler M."/>
            <person name="Mettler T."/>
            <person name="Vaughan C.K."/>
            <person name="Li J."/>
            <person name="Francisco P."/>
            <person name="Gil M."/>
            <person name="Reinhold H."/>
            <person name="Eicke S."/>
            <person name="Messerli G."/>
            <person name="Dorken G."/>
            <person name="Halliday K."/>
            <person name="Smith A.M."/>
            <person name="Smith S.M."/>
            <person name="Zeeman S.C."/>
        </authorList>
    </citation>
    <scope>FUNCTION</scope>
    <scope>SUBCELLULAR LOCATION</scope>
    <scope>BIOPHYSICOCHEMICAL PROPERTIES</scope>
    <scope>DISRUPTION PHENOTYPE</scope>
    <scope>GENE FAMILY</scope>
    <scope>NOMENCLATURE</scope>
</reference>
<reference key="5">
    <citation type="journal article" date="2008" name="PLoS ONE">
        <title>Sorting signals, N-terminal modifications and abundance of the chloroplast proteome.</title>
        <authorList>
            <person name="Zybailov B."/>
            <person name="Rutschow H."/>
            <person name="Friso G."/>
            <person name="Rudella A."/>
            <person name="Emanuelsson O."/>
            <person name="Sun Q."/>
            <person name="van Wijk K.J."/>
        </authorList>
    </citation>
    <scope>IDENTIFICATION BY MASS SPECTROMETRY</scope>
    <scope>SUBCELLULAR LOCATION [LARGE SCALE ANALYSIS]</scope>
</reference>
<reference key="6">
    <citation type="journal article" date="2009" name="Arch. Biochem. Biophys.">
        <title>Catalytically-inactive beta-amylase BAM4 required for starch breakdown in Arabidopsis leaves is a starch-binding-protein.</title>
        <authorList>
            <person name="Li J."/>
            <person name="Francisco P."/>
            <person name="Zhou W."/>
            <person name="Edner C."/>
            <person name="Steup M."/>
            <person name="Ritte G."/>
            <person name="Bond C.S."/>
            <person name="Smith S.M."/>
        </authorList>
    </citation>
    <scope>FUNCTION</scope>
    <scope>BIOPHYSICOCHEMICAL PROPERTIES</scope>
</reference>
<comment type="function">
    <text evidence="4 6">Low beta-amylase activity. Interacts poorly with starch or other alpha-1,4-glucan.</text>
</comment>
<comment type="catalytic activity">
    <reaction>
        <text>Hydrolysis of (1-&gt;4)-alpha-D-glucosidic linkages in polysaccharides so as to remove successive maltose units from the non-reducing ends of the chains.</text>
        <dbReference type="EC" id="3.2.1.2"/>
    </reaction>
</comment>
<comment type="activity regulation">
    <text evidence="1">Redox regulation; active in reducing conditions, inactive in oxidizing conditions.</text>
</comment>
<comment type="biophysicochemical properties">
    <phDependence>
        <text evidence="4 6">Optimum pH is 6.</text>
    </phDependence>
</comment>
<comment type="subcellular location">
    <subcellularLocation>
        <location evidence="4 5">Plastid</location>
        <location evidence="4 5">Chloroplast</location>
    </subcellularLocation>
</comment>
<comment type="induction">
    <text evidence="3">Slightly by cold stress.</text>
</comment>
<comment type="disruption phenotype">
    <text evidence="4">Normal growth rate and starch breakdown in leaves during the night.</text>
</comment>
<comment type="similarity">
    <text evidence="7">Belongs to the glycosyl hydrolase 14 family.</text>
</comment>
<comment type="sequence caution" evidence="7">
    <conflict type="erroneous gene model prediction">
        <sequence resource="EMBL-CDS" id="AAC13634"/>
    </conflict>
</comment>
<comment type="sequence caution" evidence="7">
    <conflict type="erroneous gene model prediction">
        <sequence resource="EMBL-CDS" id="CAB80858"/>
    </conflict>
</comment>
<gene>
    <name type="primary">BAM2</name>
    <name type="synonym">BMY9</name>
    <name type="ordered locus">At4g00490</name>
    <name type="ORF">F6N23.1</name>
</gene>